<comment type="function">
    <text evidence="1">Phosphorylation of dTMP to form dTDP in both de novo and salvage pathways of dTTP synthesis.</text>
</comment>
<comment type="catalytic activity">
    <reaction>
        <text>dTMP + ATP = dTDP + ADP</text>
        <dbReference type="Rhea" id="RHEA:13517"/>
        <dbReference type="ChEBI" id="CHEBI:30616"/>
        <dbReference type="ChEBI" id="CHEBI:58369"/>
        <dbReference type="ChEBI" id="CHEBI:63528"/>
        <dbReference type="ChEBI" id="CHEBI:456216"/>
        <dbReference type="EC" id="2.7.4.9"/>
    </reaction>
</comment>
<comment type="similarity">
    <text evidence="3">Belongs to the thymidylate kinase family.</text>
</comment>
<dbReference type="EC" id="2.7.4.9"/>
<dbReference type="EMBL" id="U00089">
    <property type="protein sequence ID" value="AAB95796.1"/>
    <property type="molecule type" value="Genomic_DNA"/>
</dbReference>
<dbReference type="PIR" id="S73474">
    <property type="entry name" value="S73474"/>
</dbReference>
<dbReference type="RefSeq" id="NP_109694.1">
    <property type="nucleotide sequence ID" value="NC_000912.1"/>
</dbReference>
<dbReference type="RefSeq" id="WP_010874363.1">
    <property type="nucleotide sequence ID" value="NZ_OU342337.1"/>
</dbReference>
<dbReference type="SMR" id="P75106"/>
<dbReference type="IntAct" id="P75106">
    <property type="interactions" value="4"/>
</dbReference>
<dbReference type="STRING" id="272634.MPN_006"/>
<dbReference type="EnsemblBacteria" id="AAB95796">
    <property type="protein sequence ID" value="AAB95796"/>
    <property type="gene ID" value="MPN_006"/>
</dbReference>
<dbReference type="GeneID" id="66609355"/>
<dbReference type="KEGG" id="mpn:MPN_006"/>
<dbReference type="PATRIC" id="fig|272634.6.peg.6"/>
<dbReference type="HOGENOM" id="CLU_049131_0_2_14"/>
<dbReference type="OrthoDB" id="9774907at2"/>
<dbReference type="BioCyc" id="MPNE272634:G1GJ3-9-MONOMER"/>
<dbReference type="Proteomes" id="UP000000808">
    <property type="component" value="Chromosome"/>
</dbReference>
<dbReference type="GO" id="GO:0005829">
    <property type="term" value="C:cytosol"/>
    <property type="evidence" value="ECO:0007669"/>
    <property type="project" value="TreeGrafter"/>
</dbReference>
<dbReference type="GO" id="GO:0005524">
    <property type="term" value="F:ATP binding"/>
    <property type="evidence" value="ECO:0007669"/>
    <property type="project" value="UniProtKB-UniRule"/>
</dbReference>
<dbReference type="GO" id="GO:0004798">
    <property type="term" value="F:dTMP kinase activity"/>
    <property type="evidence" value="ECO:0007669"/>
    <property type="project" value="UniProtKB-UniRule"/>
</dbReference>
<dbReference type="GO" id="GO:0006233">
    <property type="term" value="P:dTDP biosynthetic process"/>
    <property type="evidence" value="ECO:0007669"/>
    <property type="project" value="InterPro"/>
</dbReference>
<dbReference type="GO" id="GO:0006235">
    <property type="term" value="P:dTTP biosynthetic process"/>
    <property type="evidence" value="ECO:0007669"/>
    <property type="project" value="UniProtKB-UniRule"/>
</dbReference>
<dbReference type="GO" id="GO:0006227">
    <property type="term" value="P:dUDP biosynthetic process"/>
    <property type="evidence" value="ECO:0007669"/>
    <property type="project" value="TreeGrafter"/>
</dbReference>
<dbReference type="CDD" id="cd01672">
    <property type="entry name" value="TMPK"/>
    <property type="match status" value="1"/>
</dbReference>
<dbReference type="FunFam" id="3.40.50.300:FF:000225">
    <property type="entry name" value="Thymidylate kinase"/>
    <property type="match status" value="1"/>
</dbReference>
<dbReference type="Gene3D" id="3.40.50.300">
    <property type="entry name" value="P-loop containing nucleotide triphosphate hydrolases"/>
    <property type="match status" value="1"/>
</dbReference>
<dbReference type="HAMAP" id="MF_00165">
    <property type="entry name" value="Thymidylate_kinase"/>
    <property type="match status" value="1"/>
</dbReference>
<dbReference type="InterPro" id="IPR027417">
    <property type="entry name" value="P-loop_NTPase"/>
</dbReference>
<dbReference type="InterPro" id="IPR039430">
    <property type="entry name" value="Thymidylate_kin-like_dom"/>
</dbReference>
<dbReference type="InterPro" id="IPR018095">
    <property type="entry name" value="Thymidylate_kin_CS"/>
</dbReference>
<dbReference type="InterPro" id="IPR018094">
    <property type="entry name" value="Thymidylate_kinase"/>
</dbReference>
<dbReference type="NCBIfam" id="TIGR00041">
    <property type="entry name" value="DTMP_kinase"/>
    <property type="match status" value="1"/>
</dbReference>
<dbReference type="PANTHER" id="PTHR10344">
    <property type="entry name" value="THYMIDYLATE KINASE"/>
    <property type="match status" value="1"/>
</dbReference>
<dbReference type="PANTHER" id="PTHR10344:SF4">
    <property type="entry name" value="UMP-CMP KINASE 2, MITOCHONDRIAL"/>
    <property type="match status" value="1"/>
</dbReference>
<dbReference type="Pfam" id="PF02223">
    <property type="entry name" value="Thymidylate_kin"/>
    <property type="match status" value="1"/>
</dbReference>
<dbReference type="SUPFAM" id="SSF52540">
    <property type="entry name" value="P-loop containing nucleoside triphosphate hydrolases"/>
    <property type="match status" value="1"/>
</dbReference>
<dbReference type="PROSITE" id="PS01331">
    <property type="entry name" value="THYMIDYLATE_KINASE"/>
    <property type="match status" value="1"/>
</dbReference>
<gene>
    <name type="primary">tmk</name>
    <name type="ordered locus">MPN_006</name>
    <name type="ORF">MP148</name>
</gene>
<accession>P75106</accession>
<organism>
    <name type="scientific">Mycoplasma pneumoniae (strain ATCC 29342 / M129 / Subtype 1)</name>
    <name type="common">Mycoplasmoides pneumoniae</name>
    <dbReference type="NCBI Taxonomy" id="272634"/>
    <lineage>
        <taxon>Bacteria</taxon>
        <taxon>Bacillati</taxon>
        <taxon>Mycoplasmatota</taxon>
        <taxon>Mycoplasmoidales</taxon>
        <taxon>Mycoplasmoidaceae</taxon>
        <taxon>Mycoplasmoides</taxon>
    </lineage>
</organism>
<keyword id="KW-0067">ATP-binding</keyword>
<keyword id="KW-0418">Kinase</keyword>
<keyword id="KW-0545">Nucleotide biosynthesis</keyword>
<keyword id="KW-0547">Nucleotide-binding</keyword>
<keyword id="KW-1185">Reference proteome</keyword>
<keyword id="KW-0808">Transferase</keyword>
<reference key="1">
    <citation type="journal article" date="1996" name="Nucleic Acids Res.">
        <title>Complete sequence analysis of the genome of the bacterium Mycoplasma pneumoniae.</title>
        <authorList>
            <person name="Himmelreich R."/>
            <person name="Hilbert H."/>
            <person name="Plagens H."/>
            <person name="Pirkl E."/>
            <person name="Li B.-C."/>
            <person name="Herrmann R."/>
        </authorList>
    </citation>
    <scope>NUCLEOTIDE SEQUENCE [LARGE SCALE GENOMIC DNA]</scope>
    <source>
        <strain>ATCC 29342 / M129 / Subtype 1</strain>
    </source>
</reference>
<proteinExistence type="inferred from homology"/>
<name>KTHY_MYCPN</name>
<protein>
    <recommendedName>
        <fullName>Thymidylate kinase</fullName>
        <ecNumber>2.7.4.9</ecNumber>
    </recommendedName>
    <alternativeName>
        <fullName>dTMP kinase</fullName>
    </alternativeName>
</protein>
<sequence length="210" mass="23711">MKQGVFVAIEGVDGAGKTVLLEAFKQRFPQSFLGFKTLFSREPGGTPLAEKIRALLLHEAMEPLTEAYLFAASRTEHVRQLIQPALQQKQLVIVDRFVWSSYAYQGLIKKVGLDVVKKLNADAVGDSMPDFTFIVDCDFETALNRMAKRGQDNLLDNTVKKQADFNTMRQYYHSLVDNKRVFLLDGQNQTGCLEQFIEQLSQCLTQPTLS</sequence>
<evidence type="ECO:0000250" key="1"/>
<evidence type="ECO:0000255" key="2"/>
<evidence type="ECO:0000305" key="3"/>
<feature type="chain" id="PRO_0000155307" description="Thymidylate kinase">
    <location>
        <begin position="1"/>
        <end position="210"/>
    </location>
</feature>
<feature type="binding site" evidence="2">
    <location>
        <begin position="11"/>
        <end position="18"/>
    </location>
    <ligand>
        <name>ATP</name>
        <dbReference type="ChEBI" id="CHEBI:30616"/>
    </ligand>
</feature>